<reference key="1">
    <citation type="journal article" date="2000" name="Structure">
        <title>Dimeric structure of the coxsackievirus and adenovirus receptor D1 domain at 1.7 A resolution.</title>
        <authorList>
            <person name="van Raaij M.J."/>
            <person name="Chouin E."/>
            <person name="van der Zandt H."/>
            <person name="Bergelson J.M."/>
            <person name="Cusack S."/>
        </authorList>
    </citation>
    <scope>NUCLEOTIDE SEQUENCE [MRNA]</scope>
</reference>
<reference key="2">
    <citation type="submission" date="2003-01" db="EMBL/GenBank/DDBJ databases">
        <authorList>
            <consortium name="NIH - Zebrafish Gene Collection (ZGC) project"/>
        </authorList>
    </citation>
    <scope>NUCLEOTIDE SEQUENCE [LARGE SCALE MRNA]</scope>
    <source>
        <strain>AB</strain>
        <tissue>Embryo</tissue>
    </source>
</reference>
<reference key="3">
    <citation type="journal article" date="2013" name="Nature">
        <title>The zebrafish reference genome sequence and its relationship to the human genome.</title>
        <authorList>
            <person name="Howe K."/>
            <person name="Clark M.D."/>
            <person name="Torroja C.F."/>
            <person name="Torrance J."/>
            <person name="Berthelot C."/>
            <person name="Muffato M."/>
            <person name="Collins J.E."/>
            <person name="Humphray S."/>
            <person name="McLaren K."/>
            <person name="Matthews L."/>
            <person name="McLaren S."/>
            <person name="Sealy I."/>
            <person name="Caccamo M."/>
            <person name="Churcher C."/>
            <person name="Scott C."/>
            <person name="Barrett J.C."/>
            <person name="Koch R."/>
            <person name="Rauch G.J."/>
            <person name="White S."/>
            <person name="Chow W."/>
            <person name="Kilian B."/>
            <person name="Quintais L.T."/>
            <person name="Guerra-Assuncao J.A."/>
            <person name="Zhou Y."/>
            <person name="Gu Y."/>
            <person name="Yen J."/>
            <person name="Vogel J.H."/>
            <person name="Eyre T."/>
            <person name="Redmond S."/>
            <person name="Banerjee R."/>
            <person name="Chi J."/>
            <person name="Fu B."/>
            <person name="Langley E."/>
            <person name="Maguire S.F."/>
            <person name="Laird G.K."/>
            <person name="Lloyd D."/>
            <person name="Kenyon E."/>
            <person name="Donaldson S."/>
            <person name="Sehra H."/>
            <person name="Almeida-King J."/>
            <person name="Loveland J."/>
            <person name="Trevanion S."/>
            <person name="Jones M."/>
            <person name="Quail M."/>
            <person name="Willey D."/>
            <person name="Hunt A."/>
            <person name="Burton J."/>
            <person name="Sims S."/>
            <person name="McLay K."/>
            <person name="Plumb B."/>
            <person name="Davis J."/>
            <person name="Clee C."/>
            <person name="Oliver K."/>
            <person name="Clark R."/>
            <person name="Riddle C."/>
            <person name="Elliot D."/>
            <person name="Threadgold G."/>
            <person name="Harden G."/>
            <person name="Ware D."/>
            <person name="Begum S."/>
            <person name="Mortimore B."/>
            <person name="Kerry G."/>
            <person name="Heath P."/>
            <person name="Phillimore B."/>
            <person name="Tracey A."/>
            <person name="Corby N."/>
            <person name="Dunn M."/>
            <person name="Johnson C."/>
            <person name="Wood J."/>
            <person name="Clark S."/>
            <person name="Pelan S."/>
            <person name="Griffiths G."/>
            <person name="Smith M."/>
            <person name="Glithero R."/>
            <person name="Howden P."/>
            <person name="Barker N."/>
            <person name="Lloyd C."/>
            <person name="Stevens C."/>
            <person name="Harley J."/>
            <person name="Holt K."/>
            <person name="Panagiotidis G."/>
            <person name="Lovell J."/>
            <person name="Beasley H."/>
            <person name="Henderson C."/>
            <person name="Gordon D."/>
            <person name="Auger K."/>
            <person name="Wright D."/>
            <person name="Collins J."/>
            <person name="Raisen C."/>
            <person name="Dyer L."/>
            <person name="Leung K."/>
            <person name="Robertson L."/>
            <person name="Ambridge K."/>
            <person name="Leongamornlert D."/>
            <person name="McGuire S."/>
            <person name="Gilderthorp R."/>
            <person name="Griffiths C."/>
            <person name="Manthravadi D."/>
            <person name="Nichol S."/>
            <person name="Barker G."/>
            <person name="Whitehead S."/>
            <person name="Kay M."/>
            <person name="Brown J."/>
            <person name="Murnane C."/>
            <person name="Gray E."/>
            <person name="Humphries M."/>
            <person name="Sycamore N."/>
            <person name="Barker D."/>
            <person name="Saunders D."/>
            <person name="Wallis J."/>
            <person name="Babbage A."/>
            <person name="Hammond S."/>
            <person name="Mashreghi-Mohammadi M."/>
            <person name="Barr L."/>
            <person name="Martin S."/>
            <person name="Wray P."/>
            <person name="Ellington A."/>
            <person name="Matthews N."/>
            <person name="Ellwood M."/>
            <person name="Woodmansey R."/>
            <person name="Clark G."/>
            <person name="Cooper J."/>
            <person name="Tromans A."/>
            <person name="Grafham D."/>
            <person name="Skuce C."/>
            <person name="Pandian R."/>
            <person name="Andrews R."/>
            <person name="Harrison E."/>
            <person name="Kimberley A."/>
            <person name="Garnett J."/>
            <person name="Fosker N."/>
            <person name="Hall R."/>
            <person name="Garner P."/>
            <person name="Kelly D."/>
            <person name="Bird C."/>
            <person name="Palmer S."/>
            <person name="Gehring I."/>
            <person name="Berger A."/>
            <person name="Dooley C.M."/>
            <person name="Ersan-Urun Z."/>
            <person name="Eser C."/>
            <person name="Geiger H."/>
            <person name="Geisler M."/>
            <person name="Karotki L."/>
            <person name="Kirn A."/>
            <person name="Konantz J."/>
            <person name="Konantz M."/>
            <person name="Oberlander M."/>
            <person name="Rudolph-Geiger S."/>
            <person name="Teucke M."/>
            <person name="Lanz C."/>
            <person name="Raddatz G."/>
            <person name="Osoegawa K."/>
            <person name="Zhu B."/>
            <person name="Rapp A."/>
            <person name="Widaa S."/>
            <person name="Langford C."/>
            <person name="Yang F."/>
            <person name="Schuster S.C."/>
            <person name="Carter N.P."/>
            <person name="Harrow J."/>
            <person name="Ning Z."/>
            <person name="Herrero J."/>
            <person name="Searle S.M."/>
            <person name="Enright A."/>
            <person name="Geisler R."/>
            <person name="Plasterk R.H."/>
            <person name="Lee C."/>
            <person name="Westerfield M."/>
            <person name="de Jong P.J."/>
            <person name="Zon L.I."/>
            <person name="Postlethwait J.H."/>
            <person name="Nusslein-Volhard C."/>
            <person name="Hubbard T.J."/>
            <person name="Roest Crollius H."/>
            <person name="Rogers J."/>
            <person name="Stemple D.L."/>
        </authorList>
    </citation>
    <scope>NUCLEOTIDE SEQUENCE [LARGE SCALE GENOMIC DNA] OF 75-372</scope>
    <source>
        <strain>Tuebingen</strain>
    </source>
</reference>
<reference key="4">
    <citation type="journal article" date="2002" name="J. Virol.">
        <title>A zebrafish coxsackievirus and adenovirus receptor homologue interacts with coxsackie B virus and adenovirus.</title>
        <authorList>
            <person name="Petrella J."/>
            <person name="Cohen C.J."/>
            <person name="Gaetz J."/>
            <person name="Bergelson J.M."/>
        </authorList>
    </citation>
    <scope>IDENTIFICATION</scope>
</reference>
<evidence type="ECO:0000250" key="1"/>
<evidence type="ECO:0000250" key="2">
    <source>
        <dbReference type="UniProtKB" id="P78310"/>
    </source>
</evidence>
<evidence type="ECO:0000255" key="3"/>
<evidence type="ECO:0000255" key="4">
    <source>
        <dbReference type="PROSITE-ProRule" id="PRU00114"/>
    </source>
</evidence>
<evidence type="ECO:0000256" key="5">
    <source>
        <dbReference type="SAM" id="MobiDB-lite"/>
    </source>
</evidence>
<proteinExistence type="evidence at transcript level"/>
<protein>
    <recommendedName>
        <fullName>Coxsackievirus and adenovirus receptor homolog</fullName>
        <shortName>CAR</shortName>
    </recommendedName>
</protein>
<gene>
    <name type="primary">cxadr</name>
</gene>
<sequence>MDMRTSFLCVTYVILLTGSACGLQITSTGQTSIEKASGESVKLDCQFTLASDDSGPLDIEWSLQPSDNQKEEKVVIVYSGDRAFEHYYDPLKGRVHFNSPDPKNGDASMNIMGLKATDTGTYQCKIKKVPGIASRKYLLTVMVRPSKPKCSAEGQTYVGKNMVLKCSSVEGTQPMEYIWERTSGNKLLPPLAILDKVTGTMTLKNATGDASGTYRCQAKNRVGTEECVVEVTITQPPNTAGIIAGVIICILLLLILLALILFCCCRARHKKKYEKEIAYEIREDVPPPKSRVSTARSFTSVGSQRSSLGSMSPSNLHEYSKPQYDKIPSEEYDRPPSHAPIPPPSRMAGPNLSRMGAIPVMIPAQNKDGSIV</sequence>
<comment type="function">
    <text evidence="1">May function as a homophilic cell adhesion molecule and be essential for tight junction integrity. May also be involved in transepithelial migration of leukocytes through adhesive interactions with jaml. The interaction between both receptors may also mediate the activation of gamma-delta T-cells, a subpopulation of T-cells residing in epithelia and involved in tissue homeostasis and repair (By similarity).</text>
</comment>
<comment type="subunit">
    <text evidence="1">Monomer. Probably homodimer formed by 2 molecules on adjacent cells (By similarity).</text>
</comment>
<comment type="subcellular location">
    <subcellularLocation>
        <location evidence="2">Cell membrane</location>
        <topology evidence="3">Single-pass type I membrane protein</topology>
    </subcellularLocation>
    <subcellularLocation>
        <location evidence="2">Basolateral cell membrane</location>
        <topology evidence="3">Single-pass type I membrane protein</topology>
    </subcellularLocation>
    <subcellularLocation>
        <location evidence="2">Cell junction</location>
        <location evidence="2">Tight junction</location>
    </subcellularLocation>
    <subcellularLocation>
        <location evidence="2">Cell junction</location>
        <location evidence="2">Adherens junction</location>
    </subcellularLocation>
</comment>
<comment type="domain">
    <text evidence="1">The Ig-like C2-type 1 domain may mediate homodimerization.</text>
</comment>
<organism>
    <name type="scientific">Danio rerio</name>
    <name type="common">Zebrafish</name>
    <name type="synonym">Brachydanio rerio</name>
    <dbReference type="NCBI Taxonomy" id="7955"/>
    <lineage>
        <taxon>Eukaryota</taxon>
        <taxon>Metazoa</taxon>
        <taxon>Chordata</taxon>
        <taxon>Craniata</taxon>
        <taxon>Vertebrata</taxon>
        <taxon>Euteleostomi</taxon>
        <taxon>Actinopterygii</taxon>
        <taxon>Neopterygii</taxon>
        <taxon>Teleostei</taxon>
        <taxon>Ostariophysi</taxon>
        <taxon>Cypriniformes</taxon>
        <taxon>Danionidae</taxon>
        <taxon>Danioninae</taxon>
        <taxon>Danio</taxon>
    </lineage>
</organism>
<dbReference type="EMBL" id="AF268197">
    <property type="protein sequence ID" value="AAK58592.1"/>
    <property type="molecule type" value="mRNA"/>
</dbReference>
<dbReference type="EMBL" id="BC045286">
    <property type="protein sequence ID" value="AAH45286.1"/>
    <property type="molecule type" value="mRNA"/>
</dbReference>
<dbReference type="EMBL" id="AL732562">
    <property type="protein sequence ID" value="CAD61163.1"/>
    <property type="molecule type" value="Genomic_DNA"/>
</dbReference>
<dbReference type="RefSeq" id="NP_694480.1">
    <property type="nucleotide sequence ID" value="NM_152948.2"/>
</dbReference>
<dbReference type="SMR" id="Q90Y50"/>
<dbReference type="FunCoup" id="Q90Y50">
    <property type="interactions" value="1055"/>
</dbReference>
<dbReference type="STRING" id="7955.ENSDARP00000064106"/>
<dbReference type="GlyCosmos" id="Q90Y50">
    <property type="glycosylation" value="1 site, No reported glycans"/>
</dbReference>
<dbReference type="PaxDb" id="7955-ENSDARP00000064106"/>
<dbReference type="PeptideAtlas" id="Q90Y50"/>
<dbReference type="Ensembl" id="ENSDART00000064107">
    <property type="protein sequence ID" value="ENSDARP00000064106"/>
    <property type="gene ID" value="ENSDARG00000043658"/>
</dbReference>
<dbReference type="Ensembl" id="ENSDART00000159751">
    <property type="protein sequence ID" value="ENSDARP00000141108"/>
    <property type="gene ID" value="ENSDARG00000043658"/>
</dbReference>
<dbReference type="GeneID" id="791793"/>
<dbReference type="KEGG" id="dre:791793"/>
<dbReference type="AGR" id="ZFIN:ZDB-GENE-020814-2"/>
<dbReference type="CTD" id="1525"/>
<dbReference type="ZFIN" id="ZDB-GENE-020814-2">
    <property type="gene designation" value="cxadr"/>
</dbReference>
<dbReference type="eggNOG" id="ENOG502QSG0">
    <property type="taxonomic scope" value="Eukaryota"/>
</dbReference>
<dbReference type="HOGENOM" id="CLU_040549_0_0_1"/>
<dbReference type="InParanoid" id="Q90Y50"/>
<dbReference type="OrthoDB" id="8902063at2759"/>
<dbReference type="PhylomeDB" id="Q90Y50"/>
<dbReference type="TreeFam" id="TF330875"/>
<dbReference type="Reactome" id="R-DRE-198933">
    <property type="pathway name" value="Immunoregulatory interactions between a Lymphoid and a non-Lymphoid cell"/>
</dbReference>
<dbReference type="Reactome" id="R-DRE-202733">
    <property type="pathway name" value="Cell surface interactions at the vascular wall"/>
</dbReference>
<dbReference type="PRO" id="PR:Q90Y50"/>
<dbReference type="Proteomes" id="UP000000437">
    <property type="component" value="Alternate scaffold 10"/>
</dbReference>
<dbReference type="Proteomes" id="UP000000437">
    <property type="component" value="Chromosome 10"/>
</dbReference>
<dbReference type="Bgee" id="ENSDARG00000043658">
    <property type="expression patterns" value="Expressed in liver and 21 other cell types or tissues"/>
</dbReference>
<dbReference type="ExpressionAtlas" id="Q90Y50">
    <property type="expression patterns" value="baseline"/>
</dbReference>
<dbReference type="GO" id="GO:0005912">
    <property type="term" value="C:adherens junction"/>
    <property type="evidence" value="ECO:0007669"/>
    <property type="project" value="UniProtKB-SubCell"/>
</dbReference>
<dbReference type="GO" id="GO:0016323">
    <property type="term" value="C:basolateral plasma membrane"/>
    <property type="evidence" value="ECO:0000318"/>
    <property type="project" value="GO_Central"/>
</dbReference>
<dbReference type="GO" id="GO:0005923">
    <property type="term" value="C:bicellular tight junction"/>
    <property type="evidence" value="ECO:0000314"/>
    <property type="project" value="ZFIN"/>
</dbReference>
<dbReference type="GO" id="GO:0009986">
    <property type="term" value="C:cell surface"/>
    <property type="evidence" value="ECO:0000314"/>
    <property type="project" value="ZFIN"/>
</dbReference>
<dbReference type="GO" id="GO:0014704">
    <property type="term" value="C:intercalated disc"/>
    <property type="evidence" value="ECO:0000318"/>
    <property type="project" value="GO_Central"/>
</dbReference>
<dbReference type="GO" id="GO:0050839">
    <property type="term" value="F:cell adhesion molecule binding"/>
    <property type="evidence" value="ECO:0000318"/>
    <property type="project" value="GO_Central"/>
</dbReference>
<dbReference type="GO" id="GO:0001618">
    <property type="term" value="F:virus receptor activity"/>
    <property type="evidence" value="ECO:0000314"/>
    <property type="project" value="ZFIN"/>
</dbReference>
<dbReference type="GO" id="GO:0034109">
    <property type="term" value="P:homotypic cell-cell adhesion"/>
    <property type="evidence" value="ECO:0000318"/>
    <property type="project" value="GO_Central"/>
</dbReference>
<dbReference type="GO" id="GO:0001822">
    <property type="term" value="P:kidney development"/>
    <property type="evidence" value="ECO:0000315"/>
    <property type="project" value="ZFIN"/>
</dbReference>
<dbReference type="CDD" id="cd20960">
    <property type="entry name" value="IgV_CAR_like"/>
    <property type="match status" value="1"/>
</dbReference>
<dbReference type="FunFam" id="2.60.40.10:FF:000095">
    <property type="entry name" value="immunoglobulin superfamily member 11 isoform X1"/>
    <property type="match status" value="1"/>
</dbReference>
<dbReference type="Gene3D" id="2.60.40.10">
    <property type="entry name" value="Immunoglobulins"/>
    <property type="match status" value="2"/>
</dbReference>
<dbReference type="InterPro" id="IPR052307">
    <property type="entry name" value="EJ_Adhesion_Regulator"/>
</dbReference>
<dbReference type="InterPro" id="IPR007110">
    <property type="entry name" value="Ig-like_dom"/>
</dbReference>
<dbReference type="InterPro" id="IPR036179">
    <property type="entry name" value="Ig-like_dom_sf"/>
</dbReference>
<dbReference type="InterPro" id="IPR013783">
    <property type="entry name" value="Ig-like_fold"/>
</dbReference>
<dbReference type="InterPro" id="IPR003599">
    <property type="entry name" value="Ig_sub"/>
</dbReference>
<dbReference type="InterPro" id="IPR003598">
    <property type="entry name" value="Ig_sub2"/>
</dbReference>
<dbReference type="InterPro" id="IPR013106">
    <property type="entry name" value="Ig_V-set"/>
</dbReference>
<dbReference type="PANTHER" id="PTHR44468:SF3">
    <property type="entry name" value="COXSACKIEVIRUS AND ADENOVIRUS RECEPTOR"/>
    <property type="match status" value="1"/>
</dbReference>
<dbReference type="PANTHER" id="PTHR44468">
    <property type="entry name" value="COXSACKIEVIRUS AND ADENOVIRUS RECEPTOR-RELATED"/>
    <property type="match status" value="1"/>
</dbReference>
<dbReference type="Pfam" id="PF13927">
    <property type="entry name" value="Ig_3"/>
    <property type="match status" value="1"/>
</dbReference>
<dbReference type="Pfam" id="PF07686">
    <property type="entry name" value="V-set"/>
    <property type="match status" value="1"/>
</dbReference>
<dbReference type="SMART" id="SM00409">
    <property type="entry name" value="IG"/>
    <property type="match status" value="2"/>
</dbReference>
<dbReference type="SMART" id="SM00408">
    <property type="entry name" value="IGc2"/>
    <property type="match status" value="2"/>
</dbReference>
<dbReference type="SMART" id="SM00406">
    <property type="entry name" value="IGv"/>
    <property type="match status" value="1"/>
</dbReference>
<dbReference type="SUPFAM" id="SSF48726">
    <property type="entry name" value="Immunoglobulin"/>
    <property type="match status" value="2"/>
</dbReference>
<dbReference type="PROSITE" id="PS50835">
    <property type="entry name" value="IG_LIKE"/>
    <property type="match status" value="2"/>
</dbReference>
<accession>Q90Y50</accession>
<accession>Q804R4</accession>
<feature type="signal peptide" evidence="3">
    <location>
        <begin position="1"/>
        <end position="22"/>
    </location>
</feature>
<feature type="chain" id="PRO_0000014743" description="Coxsackievirus and adenovirus receptor homolog">
    <location>
        <begin position="23"/>
        <end position="372"/>
    </location>
</feature>
<feature type="topological domain" description="Extracellular" evidence="3">
    <location>
        <begin position="23"/>
        <end position="241"/>
    </location>
</feature>
<feature type="transmembrane region" description="Helical" evidence="3">
    <location>
        <begin position="242"/>
        <end position="262"/>
    </location>
</feature>
<feature type="topological domain" description="Cytoplasmic" evidence="3">
    <location>
        <begin position="263"/>
        <end position="372"/>
    </location>
</feature>
<feature type="domain" description="Ig-like C2-type 1">
    <location>
        <begin position="23"/>
        <end position="140"/>
    </location>
</feature>
<feature type="domain" description="Ig-like C2-type 2">
    <location>
        <begin position="130"/>
        <end position="234"/>
    </location>
</feature>
<feature type="region of interest" description="Disordered" evidence="5">
    <location>
        <begin position="286"/>
        <end position="352"/>
    </location>
</feature>
<feature type="compositionally biased region" description="Polar residues" evidence="5">
    <location>
        <begin position="291"/>
        <end position="317"/>
    </location>
</feature>
<feature type="compositionally biased region" description="Basic and acidic residues" evidence="5">
    <location>
        <begin position="318"/>
        <end position="336"/>
    </location>
</feature>
<feature type="glycosylation site" description="N-linked (GlcNAc...) asparagine" evidence="3">
    <location>
        <position position="205"/>
    </location>
</feature>
<feature type="disulfide bond" evidence="4">
    <location>
        <begin position="45"/>
        <end position="124"/>
    </location>
</feature>
<feature type="disulfide bond" evidence="4">
    <location>
        <begin position="150"/>
        <end position="227"/>
    </location>
</feature>
<feature type="disulfide bond" evidence="4">
    <location>
        <begin position="166"/>
        <end position="216"/>
    </location>
</feature>
<name>CXAR_DANRE</name>
<keyword id="KW-0130">Cell adhesion</keyword>
<keyword id="KW-0965">Cell junction</keyword>
<keyword id="KW-1003">Cell membrane</keyword>
<keyword id="KW-1015">Disulfide bond</keyword>
<keyword id="KW-0325">Glycoprotein</keyword>
<keyword id="KW-0393">Immunoglobulin domain</keyword>
<keyword id="KW-0472">Membrane</keyword>
<keyword id="KW-0675">Receptor</keyword>
<keyword id="KW-1185">Reference proteome</keyword>
<keyword id="KW-0677">Repeat</keyword>
<keyword id="KW-0732">Signal</keyword>
<keyword id="KW-0796">Tight junction</keyword>
<keyword id="KW-0812">Transmembrane</keyword>
<keyword id="KW-1133">Transmembrane helix</keyword>